<gene>
    <name evidence="1" type="primary">rbcL</name>
</gene>
<reference key="1">
    <citation type="journal article" date="1996" name="Bot. Acta">
        <title>Phylogenetic relationships between some members of the sub-family lamioideae inferred from nucleotide sequences of the root gene.</title>
        <authorList>
            <person name="Kaufmann M."/>
            <person name="Wink M."/>
        </authorList>
    </citation>
    <scope>NUCLEOTIDE SEQUENCE [GENOMIC DNA]</scope>
</reference>
<protein>
    <recommendedName>
        <fullName evidence="1">Ribulose bisphosphate carboxylase large chain</fullName>
        <shortName evidence="1">RuBisCO large subunit</shortName>
        <ecNumber evidence="1">4.1.1.39</ecNumber>
    </recommendedName>
</protein>
<organism>
    <name type="scientific">Ajuga chamaepitys</name>
    <name type="common">Yellow bugle</name>
    <name type="synonym">Teucrium chamaepitys</name>
    <dbReference type="NCBI Taxonomy" id="49984"/>
    <lineage>
        <taxon>Eukaryota</taxon>
        <taxon>Viridiplantae</taxon>
        <taxon>Streptophyta</taxon>
        <taxon>Embryophyta</taxon>
        <taxon>Tracheophyta</taxon>
        <taxon>Spermatophyta</taxon>
        <taxon>Magnoliopsida</taxon>
        <taxon>eudicotyledons</taxon>
        <taxon>Gunneridae</taxon>
        <taxon>Pentapetalae</taxon>
        <taxon>asterids</taxon>
        <taxon>lamiids</taxon>
        <taxon>Lamiales</taxon>
        <taxon>Lamiaceae</taxon>
        <taxon>Ajugoideae</taxon>
        <taxon>Ajugeae</taxon>
        <taxon>Ajuga</taxon>
    </lineage>
</organism>
<evidence type="ECO:0000255" key="1">
    <source>
        <dbReference type="HAMAP-Rule" id="MF_01338"/>
    </source>
</evidence>
<proteinExistence type="inferred from homology"/>
<geneLocation type="chloroplast"/>
<feature type="propeptide" id="PRO_0000031103" evidence="1">
    <location>
        <begin position="1"/>
        <end position="2"/>
    </location>
</feature>
<feature type="chain" id="PRO_0000031104" description="Ribulose bisphosphate carboxylase large chain">
    <location>
        <begin position="3"/>
        <end position="473" status="greater than"/>
    </location>
</feature>
<feature type="active site" description="Proton acceptor" evidence="1">
    <location>
        <position position="175"/>
    </location>
</feature>
<feature type="active site" description="Proton acceptor" evidence="1">
    <location>
        <position position="294"/>
    </location>
</feature>
<feature type="binding site" description="in homodimeric partner" evidence="1">
    <location>
        <position position="123"/>
    </location>
    <ligand>
        <name>substrate</name>
    </ligand>
</feature>
<feature type="binding site" evidence="1">
    <location>
        <position position="173"/>
    </location>
    <ligand>
        <name>substrate</name>
    </ligand>
</feature>
<feature type="binding site" evidence="1">
    <location>
        <position position="177"/>
    </location>
    <ligand>
        <name>substrate</name>
    </ligand>
</feature>
<feature type="binding site" description="via carbamate group" evidence="1">
    <location>
        <position position="201"/>
    </location>
    <ligand>
        <name>Mg(2+)</name>
        <dbReference type="ChEBI" id="CHEBI:18420"/>
    </ligand>
</feature>
<feature type="binding site" evidence="1">
    <location>
        <position position="203"/>
    </location>
    <ligand>
        <name>Mg(2+)</name>
        <dbReference type="ChEBI" id="CHEBI:18420"/>
    </ligand>
</feature>
<feature type="binding site" evidence="1">
    <location>
        <position position="204"/>
    </location>
    <ligand>
        <name>Mg(2+)</name>
        <dbReference type="ChEBI" id="CHEBI:18420"/>
    </ligand>
</feature>
<feature type="binding site" evidence="1">
    <location>
        <position position="295"/>
    </location>
    <ligand>
        <name>substrate</name>
    </ligand>
</feature>
<feature type="binding site" evidence="1">
    <location>
        <position position="327"/>
    </location>
    <ligand>
        <name>substrate</name>
    </ligand>
</feature>
<feature type="binding site" evidence="1">
    <location>
        <position position="379"/>
    </location>
    <ligand>
        <name>substrate</name>
    </ligand>
</feature>
<feature type="site" description="Transition state stabilizer" evidence="1">
    <location>
        <position position="334"/>
    </location>
</feature>
<feature type="modified residue" description="N-acetylproline" evidence="1">
    <location>
        <position position="3"/>
    </location>
</feature>
<feature type="modified residue" description="N6,N6,N6-trimethyllysine" evidence="1">
    <location>
        <position position="14"/>
    </location>
</feature>
<feature type="modified residue" description="N6-carboxylysine" evidence="1">
    <location>
        <position position="201"/>
    </location>
</feature>
<feature type="disulfide bond" description="Interchain; in linked form" evidence="1">
    <location>
        <position position="247"/>
    </location>
</feature>
<feature type="non-terminal residue">
    <location>
        <position position="473"/>
    </location>
</feature>
<dbReference type="EC" id="4.1.1.39" evidence="1"/>
<dbReference type="EMBL" id="Z37384">
    <property type="protein sequence ID" value="CAA85634.1"/>
    <property type="molecule type" value="Genomic_DNA"/>
</dbReference>
<dbReference type="SMR" id="Q31655"/>
<dbReference type="GO" id="GO:0009507">
    <property type="term" value="C:chloroplast"/>
    <property type="evidence" value="ECO:0007669"/>
    <property type="project" value="UniProtKB-SubCell"/>
</dbReference>
<dbReference type="GO" id="GO:0000287">
    <property type="term" value="F:magnesium ion binding"/>
    <property type="evidence" value="ECO:0007669"/>
    <property type="project" value="InterPro"/>
</dbReference>
<dbReference type="GO" id="GO:0004497">
    <property type="term" value="F:monooxygenase activity"/>
    <property type="evidence" value="ECO:0007669"/>
    <property type="project" value="UniProtKB-KW"/>
</dbReference>
<dbReference type="GO" id="GO:0016984">
    <property type="term" value="F:ribulose-bisphosphate carboxylase activity"/>
    <property type="evidence" value="ECO:0007669"/>
    <property type="project" value="UniProtKB-EC"/>
</dbReference>
<dbReference type="GO" id="GO:0009853">
    <property type="term" value="P:photorespiration"/>
    <property type="evidence" value="ECO:0007669"/>
    <property type="project" value="UniProtKB-KW"/>
</dbReference>
<dbReference type="GO" id="GO:0019253">
    <property type="term" value="P:reductive pentose-phosphate cycle"/>
    <property type="evidence" value="ECO:0007669"/>
    <property type="project" value="UniProtKB-KW"/>
</dbReference>
<dbReference type="CDD" id="cd08212">
    <property type="entry name" value="RuBisCO_large_I"/>
    <property type="match status" value="1"/>
</dbReference>
<dbReference type="FunFam" id="3.20.20.110:FF:000001">
    <property type="entry name" value="Ribulose bisphosphate carboxylase large chain"/>
    <property type="match status" value="1"/>
</dbReference>
<dbReference type="FunFam" id="3.30.70.150:FF:000001">
    <property type="entry name" value="Ribulose bisphosphate carboxylase large chain"/>
    <property type="match status" value="1"/>
</dbReference>
<dbReference type="Gene3D" id="3.20.20.110">
    <property type="entry name" value="Ribulose bisphosphate carboxylase, large subunit, C-terminal domain"/>
    <property type="match status" value="1"/>
</dbReference>
<dbReference type="Gene3D" id="3.30.70.150">
    <property type="entry name" value="RuBisCO large subunit, N-terminal domain"/>
    <property type="match status" value="1"/>
</dbReference>
<dbReference type="HAMAP" id="MF_01338">
    <property type="entry name" value="RuBisCO_L_type1"/>
    <property type="match status" value="1"/>
</dbReference>
<dbReference type="InterPro" id="IPR033966">
    <property type="entry name" value="RuBisCO"/>
</dbReference>
<dbReference type="InterPro" id="IPR020878">
    <property type="entry name" value="RuBisCo_large_chain_AS"/>
</dbReference>
<dbReference type="InterPro" id="IPR000685">
    <property type="entry name" value="RuBisCO_lsu_C"/>
</dbReference>
<dbReference type="InterPro" id="IPR036376">
    <property type="entry name" value="RuBisCO_lsu_C_sf"/>
</dbReference>
<dbReference type="InterPro" id="IPR017443">
    <property type="entry name" value="RuBisCO_lsu_fd_N"/>
</dbReference>
<dbReference type="InterPro" id="IPR036422">
    <property type="entry name" value="RuBisCO_lsu_N_sf"/>
</dbReference>
<dbReference type="InterPro" id="IPR020888">
    <property type="entry name" value="RuBisCO_lsuI"/>
</dbReference>
<dbReference type="NCBIfam" id="NF003252">
    <property type="entry name" value="PRK04208.1"/>
    <property type="match status" value="1"/>
</dbReference>
<dbReference type="PANTHER" id="PTHR42704">
    <property type="entry name" value="RIBULOSE BISPHOSPHATE CARBOXYLASE"/>
    <property type="match status" value="1"/>
</dbReference>
<dbReference type="PANTHER" id="PTHR42704:SF15">
    <property type="entry name" value="RIBULOSE BISPHOSPHATE CARBOXYLASE LARGE CHAIN"/>
    <property type="match status" value="1"/>
</dbReference>
<dbReference type="Pfam" id="PF00016">
    <property type="entry name" value="RuBisCO_large"/>
    <property type="match status" value="1"/>
</dbReference>
<dbReference type="Pfam" id="PF02788">
    <property type="entry name" value="RuBisCO_large_N"/>
    <property type="match status" value="1"/>
</dbReference>
<dbReference type="SFLD" id="SFLDG01052">
    <property type="entry name" value="RuBisCO"/>
    <property type="match status" value="1"/>
</dbReference>
<dbReference type="SFLD" id="SFLDS00014">
    <property type="entry name" value="RuBisCO"/>
    <property type="match status" value="1"/>
</dbReference>
<dbReference type="SFLD" id="SFLDG00301">
    <property type="entry name" value="RuBisCO-like_proteins"/>
    <property type="match status" value="1"/>
</dbReference>
<dbReference type="SUPFAM" id="SSF51649">
    <property type="entry name" value="RuBisCo, C-terminal domain"/>
    <property type="match status" value="1"/>
</dbReference>
<dbReference type="SUPFAM" id="SSF54966">
    <property type="entry name" value="RuBisCO, large subunit, small (N-terminal) domain"/>
    <property type="match status" value="1"/>
</dbReference>
<dbReference type="PROSITE" id="PS00157">
    <property type="entry name" value="RUBISCO_LARGE"/>
    <property type="match status" value="1"/>
</dbReference>
<accession>Q31655</accession>
<comment type="function">
    <text evidence="1">RuBisCO catalyzes two reactions: the carboxylation of D-ribulose 1,5-bisphosphate, the primary event in carbon dioxide fixation, as well as the oxidative fragmentation of the pentose substrate in the photorespiration process. Both reactions occur simultaneously and in competition at the same active site.</text>
</comment>
<comment type="catalytic activity">
    <reaction evidence="1">
        <text>2 (2R)-3-phosphoglycerate + 2 H(+) = D-ribulose 1,5-bisphosphate + CO2 + H2O</text>
        <dbReference type="Rhea" id="RHEA:23124"/>
        <dbReference type="ChEBI" id="CHEBI:15377"/>
        <dbReference type="ChEBI" id="CHEBI:15378"/>
        <dbReference type="ChEBI" id="CHEBI:16526"/>
        <dbReference type="ChEBI" id="CHEBI:57870"/>
        <dbReference type="ChEBI" id="CHEBI:58272"/>
        <dbReference type="EC" id="4.1.1.39"/>
    </reaction>
</comment>
<comment type="catalytic activity">
    <reaction evidence="1">
        <text>D-ribulose 1,5-bisphosphate + O2 = 2-phosphoglycolate + (2R)-3-phosphoglycerate + 2 H(+)</text>
        <dbReference type="Rhea" id="RHEA:36631"/>
        <dbReference type="ChEBI" id="CHEBI:15378"/>
        <dbReference type="ChEBI" id="CHEBI:15379"/>
        <dbReference type="ChEBI" id="CHEBI:57870"/>
        <dbReference type="ChEBI" id="CHEBI:58033"/>
        <dbReference type="ChEBI" id="CHEBI:58272"/>
    </reaction>
</comment>
<comment type="cofactor">
    <cofactor evidence="1">
        <name>Mg(2+)</name>
        <dbReference type="ChEBI" id="CHEBI:18420"/>
    </cofactor>
    <text evidence="1">Binds 1 Mg(2+) ion per subunit.</text>
</comment>
<comment type="subunit">
    <text evidence="1">Heterohexadecamer of 8 large chains and 8 small chains; disulfide-linked. The disulfide link is formed within the large subunit homodimers.</text>
</comment>
<comment type="subcellular location">
    <subcellularLocation>
        <location>Plastid</location>
        <location>Chloroplast</location>
    </subcellularLocation>
</comment>
<comment type="PTM">
    <text evidence="1">The disulfide bond which can form in the large chain dimeric partners within the hexadecamer appears to be associated with oxidative stress and protein turnover.</text>
</comment>
<comment type="miscellaneous">
    <text evidence="1">The basic functional RuBisCO is composed of a large chain homodimer in a 'head-to-tail' conformation. In form I RuBisCO this homodimer is arranged in a barrel-like tetramer with the small subunits forming a tetrameric 'cap' on each end of the 'barrel'.</text>
</comment>
<comment type="similarity">
    <text evidence="1">Belongs to the RuBisCO large chain family. Type I subfamily.</text>
</comment>
<name>RBL_AJUCH</name>
<sequence>MSPQTETKASVGFKAGVKEYKLTYYTPEYETKDTDILAAFRVTPQPGVPPEEAGAAVAAESSTGTWTTVWTDGLTSLDRYKGRCYHIEPVLGEKDQYICYVAYPLDLFEEGSVTNMFTSIVGNVFGFKALRALRLEDLRIPPAYIKTFQGPPHGIQVERDKLNKYGRPLLGCTIKPKLGLSAKNYGRAVYECLRGGLDFTKDDENVNSQPFMRWRDRFLFCAEAIYKAQAETGEIKGHYLNATAGTCEEMIKRAVFARELGVPIVMHDYLTGGFTANTTLAHYCRDNGLLLHIHRAMHAVIDRQKNHGMHFRVLAKALRLSGGDHIHAGTVVGKLEGEREITLGFVDLLRDDFVEKDRSRGIYFTQDWVSLPGVIPVASGGIHVWHMPALTEIFGDDSVLQFGGGTLGHPWGNAPGAVANRVALEACVQARNEGRDLAAEGNTIIREACKWSPELAAACEVWKEIKFEFPAMD</sequence>
<keyword id="KW-0007">Acetylation</keyword>
<keyword id="KW-0113">Calvin cycle</keyword>
<keyword id="KW-0120">Carbon dioxide fixation</keyword>
<keyword id="KW-0150">Chloroplast</keyword>
<keyword id="KW-1015">Disulfide bond</keyword>
<keyword id="KW-0456">Lyase</keyword>
<keyword id="KW-0460">Magnesium</keyword>
<keyword id="KW-0479">Metal-binding</keyword>
<keyword id="KW-0488">Methylation</keyword>
<keyword id="KW-0503">Monooxygenase</keyword>
<keyword id="KW-0560">Oxidoreductase</keyword>
<keyword id="KW-0601">Photorespiration</keyword>
<keyword id="KW-0602">Photosynthesis</keyword>
<keyword id="KW-0934">Plastid</keyword>